<proteinExistence type="inferred from homology"/>
<dbReference type="EC" id="2.7.7.18" evidence="1"/>
<dbReference type="EMBL" id="CP000382">
    <property type="protein sequence ID" value="ABK62266.1"/>
    <property type="molecule type" value="Genomic_DNA"/>
</dbReference>
<dbReference type="RefSeq" id="WP_011722575.1">
    <property type="nucleotide sequence ID" value="NC_008593.1"/>
</dbReference>
<dbReference type="SMR" id="A0Q1T2"/>
<dbReference type="STRING" id="386415.NT01CX_0075"/>
<dbReference type="KEGG" id="cno:NT01CX_0075"/>
<dbReference type="PATRIC" id="fig|386415.7.peg.1614"/>
<dbReference type="eggNOG" id="COG1057">
    <property type="taxonomic scope" value="Bacteria"/>
</dbReference>
<dbReference type="HOGENOM" id="CLU_069765_0_1_9"/>
<dbReference type="UniPathway" id="UPA00253">
    <property type="reaction ID" value="UER00332"/>
</dbReference>
<dbReference type="Proteomes" id="UP000008220">
    <property type="component" value="Chromosome"/>
</dbReference>
<dbReference type="GO" id="GO:0005524">
    <property type="term" value="F:ATP binding"/>
    <property type="evidence" value="ECO:0007669"/>
    <property type="project" value="UniProtKB-KW"/>
</dbReference>
<dbReference type="GO" id="GO:0004515">
    <property type="term" value="F:nicotinate-nucleotide adenylyltransferase activity"/>
    <property type="evidence" value="ECO:0007669"/>
    <property type="project" value="UniProtKB-UniRule"/>
</dbReference>
<dbReference type="GO" id="GO:0009435">
    <property type="term" value="P:NAD biosynthetic process"/>
    <property type="evidence" value="ECO:0007669"/>
    <property type="project" value="UniProtKB-UniRule"/>
</dbReference>
<dbReference type="CDD" id="cd02165">
    <property type="entry name" value="NMNAT"/>
    <property type="match status" value="1"/>
</dbReference>
<dbReference type="Gene3D" id="3.40.50.620">
    <property type="entry name" value="HUPs"/>
    <property type="match status" value="1"/>
</dbReference>
<dbReference type="HAMAP" id="MF_00244">
    <property type="entry name" value="NaMN_adenylyltr"/>
    <property type="match status" value="1"/>
</dbReference>
<dbReference type="InterPro" id="IPR004821">
    <property type="entry name" value="Cyt_trans-like"/>
</dbReference>
<dbReference type="InterPro" id="IPR005248">
    <property type="entry name" value="NadD/NMNAT"/>
</dbReference>
<dbReference type="InterPro" id="IPR014729">
    <property type="entry name" value="Rossmann-like_a/b/a_fold"/>
</dbReference>
<dbReference type="NCBIfam" id="TIGR00125">
    <property type="entry name" value="cyt_tran_rel"/>
    <property type="match status" value="1"/>
</dbReference>
<dbReference type="NCBIfam" id="TIGR00482">
    <property type="entry name" value="nicotinate (nicotinamide) nucleotide adenylyltransferase"/>
    <property type="match status" value="1"/>
</dbReference>
<dbReference type="NCBIfam" id="NF000840">
    <property type="entry name" value="PRK00071.1-3"/>
    <property type="match status" value="1"/>
</dbReference>
<dbReference type="PANTHER" id="PTHR39321">
    <property type="entry name" value="NICOTINATE-NUCLEOTIDE ADENYLYLTRANSFERASE-RELATED"/>
    <property type="match status" value="1"/>
</dbReference>
<dbReference type="PANTHER" id="PTHR39321:SF3">
    <property type="entry name" value="PHOSPHOPANTETHEINE ADENYLYLTRANSFERASE"/>
    <property type="match status" value="1"/>
</dbReference>
<dbReference type="Pfam" id="PF01467">
    <property type="entry name" value="CTP_transf_like"/>
    <property type="match status" value="1"/>
</dbReference>
<dbReference type="SUPFAM" id="SSF52374">
    <property type="entry name" value="Nucleotidylyl transferase"/>
    <property type="match status" value="1"/>
</dbReference>
<feature type="chain" id="PRO_0000310108" description="Probable nicotinate-nucleotide adenylyltransferase">
    <location>
        <begin position="1"/>
        <end position="200"/>
    </location>
</feature>
<evidence type="ECO:0000255" key="1">
    <source>
        <dbReference type="HAMAP-Rule" id="MF_00244"/>
    </source>
</evidence>
<comment type="function">
    <text evidence="1">Catalyzes the reversible adenylation of nicotinate mononucleotide (NaMN) to nicotinic acid adenine dinucleotide (NaAD).</text>
</comment>
<comment type="catalytic activity">
    <reaction evidence="1">
        <text>nicotinate beta-D-ribonucleotide + ATP + H(+) = deamido-NAD(+) + diphosphate</text>
        <dbReference type="Rhea" id="RHEA:22860"/>
        <dbReference type="ChEBI" id="CHEBI:15378"/>
        <dbReference type="ChEBI" id="CHEBI:30616"/>
        <dbReference type="ChEBI" id="CHEBI:33019"/>
        <dbReference type="ChEBI" id="CHEBI:57502"/>
        <dbReference type="ChEBI" id="CHEBI:58437"/>
        <dbReference type="EC" id="2.7.7.18"/>
    </reaction>
</comment>
<comment type="pathway">
    <text evidence="1">Cofactor biosynthesis; NAD(+) biosynthesis; deamido-NAD(+) from nicotinate D-ribonucleotide: step 1/1.</text>
</comment>
<comment type="similarity">
    <text evidence="1">Belongs to the NadD family.</text>
</comment>
<reference key="1">
    <citation type="journal article" date="2006" name="Nat. Biotechnol.">
        <title>The genome and transcriptomes of the anti-tumor agent Clostridium novyi-NT.</title>
        <authorList>
            <person name="Bettegowda C."/>
            <person name="Huang X."/>
            <person name="Lin J."/>
            <person name="Cheong I."/>
            <person name="Kohli M."/>
            <person name="Szabo S.A."/>
            <person name="Zhang X."/>
            <person name="Diaz L.A. Jr."/>
            <person name="Velculescu V.E."/>
            <person name="Parmigiani G."/>
            <person name="Kinzler K.W."/>
            <person name="Vogelstein B."/>
            <person name="Zhou S."/>
        </authorList>
    </citation>
    <scope>NUCLEOTIDE SEQUENCE [LARGE SCALE GENOMIC DNA]</scope>
    <source>
        <strain>NT</strain>
    </source>
</reference>
<sequence>MKKKGIFGGTFDPIHNGHLHIAYEALYKLNLDRVIFIPSGNPPHKTDKVITDANIRYKLVKDVIQNEEKFEVSDYELKNQGLSYTYKTLKHFNEKHKDTEWYFITGADCLMQLDSWKNINEVLSLCNFVVFRRSGYSMEDMLKQKERIEKKFNKKIIFLDIPVIDISSTTIRNKIKNRENISYLVPEKARCMVNKMNLYK</sequence>
<accession>A0Q1T2</accession>
<keyword id="KW-0067">ATP-binding</keyword>
<keyword id="KW-0520">NAD</keyword>
<keyword id="KW-0547">Nucleotide-binding</keyword>
<keyword id="KW-0548">Nucleotidyltransferase</keyword>
<keyword id="KW-0662">Pyridine nucleotide biosynthesis</keyword>
<keyword id="KW-1185">Reference proteome</keyword>
<keyword id="KW-0808">Transferase</keyword>
<gene>
    <name evidence="1" type="primary">nadD</name>
    <name type="ordered locus">NT01CX_0075</name>
</gene>
<protein>
    <recommendedName>
        <fullName evidence="1">Probable nicotinate-nucleotide adenylyltransferase</fullName>
        <ecNumber evidence="1">2.7.7.18</ecNumber>
    </recommendedName>
    <alternativeName>
        <fullName evidence="1">Deamido-NAD(+) diphosphorylase</fullName>
    </alternativeName>
    <alternativeName>
        <fullName evidence="1">Deamido-NAD(+) pyrophosphorylase</fullName>
    </alternativeName>
    <alternativeName>
        <fullName evidence="1">Nicotinate mononucleotide adenylyltransferase</fullName>
        <shortName evidence="1">NaMN adenylyltransferase</shortName>
    </alternativeName>
</protein>
<name>NADD_CLONN</name>
<organism>
    <name type="scientific">Clostridium novyi (strain NT)</name>
    <dbReference type="NCBI Taxonomy" id="386415"/>
    <lineage>
        <taxon>Bacteria</taxon>
        <taxon>Bacillati</taxon>
        <taxon>Bacillota</taxon>
        <taxon>Clostridia</taxon>
        <taxon>Eubacteriales</taxon>
        <taxon>Clostridiaceae</taxon>
        <taxon>Clostridium</taxon>
    </lineage>
</organism>